<name>EFTU1_SERP5</name>
<gene>
    <name evidence="2" type="primary">tuf1</name>
    <name type="ordered locus">Spro_0270</name>
</gene>
<keyword id="KW-0963">Cytoplasm</keyword>
<keyword id="KW-0251">Elongation factor</keyword>
<keyword id="KW-0342">GTP-binding</keyword>
<keyword id="KW-0378">Hydrolase</keyword>
<keyword id="KW-0460">Magnesium</keyword>
<keyword id="KW-0479">Metal-binding</keyword>
<keyword id="KW-0547">Nucleotide-binding</keyword>
<keyword id="KW-0648">Protein biosynthesis</keyword>
<feature type="chain" id="PRO_0000337516" description="Elongation factor Tu 1">
    <location>
        <begin position="1"/>
        <end position="394"/>
    </location>
</feature>
<feature type="domain" description="tr-type G">
    <location>
        <begin position="10"/>
        <end position="204"/>
    </location>
</feature>
<feature type="region of interest" description="G1" evidence="1">
    <location>
        <begin position="19"/>
        <end position="26"/>
    </location>
</feature>
<feature type="region of interest" description="G2" evidence="1">
    <location>
        <begin position="60"/>
        <end position="64"/>
    </location>
</feature>
<feature type="region of interest" description="G3" evidence="1">
    <location>
        <begin position="81"/>
        <end position="84"/>
    </location>
</feature>
<feature type="region of interest" description="G4" evidence="1">
    <location>
        <begin position="136"/>
        <end position="139"/>
    </location>
</feature>
<feature type="region of interest" description="G5" evidence="1">
    <location>
        <begin position="174"/>
        <end position="176"/>
    </location>
</feature>
<feature type="binding site" evidence="2">
    <location>
        <begin position="19"/>
        <end position="26"/>
    </location>
    <ligand>
        <name>GTP</name>
        <dbReference type="ChEBI" id="CHEBI:37565"/>
    </ligand>
</feature>
<feature type="binding site" evidence="2">
    <location>
        <position position="26"/>
    </location>
    <ligand>
        <name>Mg(2+)</name>
        <dbReference type="ChEBI" id="CHEBI:18420"/>
    </ligand>
</feature>
<feature type="binding site" evidence="2">
    <location>
        <begin position="81"/>
        <end position="85"/>
    </location>
    <ligand>
        <name>GTP</name>
        <dbReference type="ChEBI" id="CHEBI:37565"/>
    </ligand>
</feature>
<feature type="binding site" evidence="2">
    <location>
        <begin position="136"/>
        <end position="139"/>
    </location>
    <ligand>
        <name>GTP</name>
        <dbReference type="ChEBI" id="CHEBI:37565"/>
    </ligand>
</feature>
<sequence length="394" mass="43188">MSKEKFERTKPHVNVGTIGHVDHGKTTLTAAITTVLAKTYGGSARAFDQIDNAPEEKARGITINTSHVEYDTPTRHYAHVDCPGHADYVKNMITGAAQMDGAILVVAATDGPMPQTREHILLGRQVGVPFIIVFMNKCDMVDDEELLELVEMEVRELLSAYDFPGDDLPVVRGSALKALEGEAEWEAKIIELAGYLDSYIPEPERAIDKPFLLPIEDVFSISGRGTVVTGRVERGIVKVGEEVEIVGIKDTVKSTCTGVEMFRKLLDEGRAGENVGVLLRGIKREDIERGQVLAKPGSIKPHTQFDSEVYILSKDEGGRHTPFFKGYRPQFYFRTTDVTGTIELPEGVEMVMPGDNVNMKVTLIHPIAMDDGLRFAIREGGRTVGAGVVAKVIA</sequence>
<comment type="function">
    <text evidence="2">GTP hydrolase that promotes the GTP-dependent binding of aminoacyl-tRNA to the A-site of ribosomes during protein biosynthesis.</text>
</comment>
<comment type="catalytic activity">
    <reaction evidence="2">
        <text>GTP + H2O = GDP + phosphate + H(+)</text>
        <dbReference type="Rhea" id="RHEA:19669"/>
        <dbReference type="ChEBI" id="CHEBI:15377"/>
        <dbReference type="ChEBI" id="CHEBI:15378"/>
        <dbReference type="ChEBI" id="CHEBI:37565"/>
        <dbReference type="ChEBI" id="CHEBI:43474"/>
        <dbReference type="ChEBI" id="CHEBI:58189"/>
        <dbReference type="EC" id="3.6.5.3"/>
    </reaction>
    <physiologicalReaction direction="left-to-right" evidence="2">
        <dbReference type="Rhea" id="RHEA:19670"/>
    </physiologicalReaction>
</comment>
<comment type="subunit">
    <text evidence="2">Monomer.</text>
</comment>
<comment type="subcellular location">
    <subcellularLocation>
        <location evidence="2">Cytoplasm</location>
    </subcellularLocation>
</comment>
<comment type="similarity">
    <text evidence="2">Belongs to the TRAFAC class translation factor GTPase superfamily. Classic translation factor GTPase family. EF-Tu/EF-1A subfamily.</text>
</comment>
<organism>
    <name type="scientific">Serratia proteamaculans (strain 568)</name>
    <dbReference type="NCBI Taxonomy" id="399741"/>
    <lineage>
        <taxon>Bacteria</taxon>
        <taxon>Pseudomonadati</taxon>
        <taxon>Pseudomonadota</taxon>
        <taxon>Gammaproteobacteria</taxon>
        <taxon>Enterobacterales</taxon>
        <taxon>Yersiniaceae</taxon>
        <taxon>Serratia</taxon>
    </lineage>
</organism>
<dbReference type="EC" id="3.6.5.3" evidence="2"/>
<dbReference type="EMBL" id="CP000826">
    <property type="protein sequence ID" value="ABV39380.1"/>
    <property type="molecule type" value="Genomic_DNA"/>
</dbReference>
<dbReference type="SMR" id="A8G8E0"/>
<dbReference type="STRING" id="399741.Spro_0270"/>
<dbReference type="KEGG" id="spe:Spro_0270"/>
<dbReference type="eggNOG" id="COG0050">
    <property type="taxonomic scope" value="Bacteria"/>
</dbReference>
<dbReference type="HOGENOM" id="CLU_007265_0_0_6"/>
<dbReference type="OrthoDB" id="9803139at2"/>
<dbReference type="GO" id="GO:0005829">
    <property type="term" value="C:cytosol"/>
    <property type="evidence" value="ECO:0007669"/>
    <property type="project" value="TreeGrafter"/>
</dbReference>
<dbReference type="GO" id="GO:0005525">
    <property type="term" value="F:GTP binding"/>
    <property type="evidence" value="ECO:0007669"/>
    <property type="project" value="UniProtKB-UniRule"/>
</dbReference>
<dbReference type="GO" id="GO:0003924">
    <property type="term" value="F:GTPase activity"/>
    <property type="evidence" value="ECO:0007669"/>
    <property type="project" value="InterPro"/>
</dbReference>
<dbReference type="GO" id="GO:0097216">
    <property type="term" value="F:guanosine tetraphosphate binding"/>
    <property type="evidence" value="ECO:0007669"/>
    <property type="project" value="UniProtKB-ARBA"/>
</dbReference>
<dbReference type="GO" id="GO:0003746">
    <property type="term" value="F:translation elongation factor activity"/>
    <property type="evidence" value="ECO:0007669"/>
    <property type="project" value="UniProtKB-UniRule"/>
</dbReference>
<dbReference type="CDD" id="cd01884">
    <property type="entry name" value="EF_Tu"/>
    <property type="match status" value="1"/>
</dbReference>
<dbReference type="CDD" id="cd03697">
    <property type="entry name" value="EFTU_II"/>
    <property type="match status" value="1"/>
</dbReference>
<dbReference type="CDD" id="cd03707">
    <property type="entry name" value="EFTU_III"/>
    <property type="match status" value="1"/>
</dbReference>
<dbReference type="FunFam" id="2.40.30.10:FF:000001">
    <property type="entry name" value="Elongation factor Tu"/>
    <property type="match status" value="1"/>
</dbReference>
<dbReference type="FunFam" id="3.40.50.300:FF:000003">
    <property type="entry name" value="Elongation factor Tu"/>
    <property type="match status" value="1"/>
</dbReference>
<dbReference type="Gene3D" id="3.40.50.300">
    <property type="entry name" value="P-loop containing nucleotide triphosphate hydrolases"/>
    <property type="match status" value="1"/>
</dbReference>
<dbReference type="Gene3D" id="2.40.30.10">
    <property type="entry name" value="Translation factors"/>
    <property type="match status" value="2"/>
</dbReference>
<dbReference type="HAMAP" id="MF_00118_B">
    <property type="entry name" value="EF_Tu_B"/>
    <property type="match status" value="1"/>
</dbReference>
<dbReference type="InterPro" id="IPR041709">
    <property type="entry name" value="EF-Tu_GTP-bd"/>
</dbReference>
<dbReference type="InterPro" id="IPR050055">
    <property type="entry name" value="EF-Tu_GTPase"/>
</dbReference>
<dbReference type="InterPro" id="IPR004161">
    <property type="entry name" value="EFTu-like_2"/>
</dbReference>
<dbReference type="InterPro" id="IPR033720">
    <property type="entry name" value="EFTU_2"/>
</dbReference>
<dbReference type="InterPro" id="IPR031157">
    <property type="entry name" value="G_TR_CS"/>
</dbReference>
<dbReference type="InterPro" id="IPR027417">
    <property type="entry name" value="P-loop_NTPase"/>
</dbReference>
<dbReference type="InterPro" id="IPR005225">
    <property type="entry name" value="Small_GTP-bd"/>
</dbReference>
<dbReference type="InterPro" id="IPR000795">
    <property type="entry name" value="T_Tr_GTP-bd_dom"/>
</dbReference>
<dbReference type="InterPro" id="IPR009000">
    <property type="entry name" value="Transl_B-barrel_sf"/>
</dbReference>
<dbReference type="InterPro" id="IPR009001">
    <property type="entry name" value="Transl_elong_EF1A/Init_IF2_C"/>
</dbReference>
<dbReference type="InterPro" id="IPR004541">
    <property type="entry name" value="Transl_elong_EFTu/EF1A_bac/org"/>
</dbReference>
<dbReference type="InterPro" id="IPR004160">
    <property type="entry name" value="Transl_elong_EFTu/EF1A_C"/>
</dbReference>
<dbReference type="NCBIfam" id="TIGR00485">
    <property type="entry name" value="EF-Tu"/>
    <property type="match status" value="1"/>
</dbReference>
<dbReference type="NCBIfam" id="NF000766">
    <property type="entry name" value="PRK00049.1"/>
    <property type="match status" value="1"/>
</dbReference>
<dbReference type="NCBIfam" id="NF009372">
    <property type="entry name" value="PRK12735.1"/>
    <property type="match status" value="1"/>
</dbReference>
<dbReference type="NCBIfam" id="NF009373">
    <property type="entry name" value="PRK12736.1"/>
    <property type="match status" value="1"/>
</dbReference>
<dbReference type="NCBIfam" id="TIGR00231">
    <property type="entry name" value="small_GTP"/>
    <property type="match status" value="1"/>
</dbReference>
<dbReference type="PANTHER" id="PTHR43721:SF22">
    <property type="entry name" value="ELONGATION FACTOR TU, MITOCHONDRIAL"/>
    <property type="match status" value="1"/>
</dbReference>
<dbReference type="PANTHER" id="PTHR43721">
    <property type="entry name" value="ELONGATION FACTOR TU-RELATED"/>
    <property type="match status" value="1"/>
</dbReference>
<dbReference type="Pfam" id="PF00009">
    <property type="entry name" value="GTP_EFTU"/>
    <property type="match status" value="1"/>
</dbReference>
<dbReference type="Pfam" id="PF03144">
    <property type="entry name" value="GTP_EFTU_D2"/>
    <property type="match status" value="1"/>
</dbReference>
<dbReference type="Pfam" id="PF03143">
    <property type="entry name" value="GTP_EFTU_D3"/>
    <property type="match status" value="1"/>
</dbReference>
<dbReference type="PRINTS" id="PR00315">
    <property type="entry name" value="ELONGATNFCT"/>
</dbReference>
<dbReference type="SUPFAM" id="SSF50465">
    <property type="entry name" value="EF-Tu/eEF-1alpha/eIF2-gamma C-terminal domain"/>
    <property type="match status" value="1"/>
</dbReference>
<dbReference type="SUPFAM" id="SSF52540">
    <property type="entry name" value="P-loop containing nucleoside triphosphate hydrolases"/>
    <property type="match status" value="1"/>
</dbReference>
<dbReference type="SUPFAM" id="SSF50447">
    <property type="entry name" value="Translation proteins"/>
    <property type="match status" value="1"/>
</dbReference>
<dbReference type="PROSITE" id="PS00301">
    <property type="entry name" value="G_TR_1"/>
    <property type="match status" value="1"/>
</dbReference>
<dbReference type="PROSITE" id="PS51722">
    <property type="entry name" value="G_TR_2"/>
    <property type="match status" value="1"/>
</dbReference>
<proteinExistence type="inferred from homology"/>
<protein>
    <recommendedName>
        <fullName evidence="2">Elongation factor Tu 1</fullName>
        <shortName evidence="2">EF-Tu 1</shortName>
        <ecNumber evidence="2">3.6.5.3</ecNumber>
    </recommendedName>
</protein>
<accession>A8G8E0</accession>
<evidence type="ECO:0000250" key="1"/>
<evidence type="ECO:0000255" key="2">
    <source>
        <dbReference type="HAMAP-Rule" id="MF_00118"/>
    </source>
</evidence>
<reference key="1">
    <citation type="submission" date="2007-09" db="EMBL/GenBank/DDBJ databases">
        <title>Complete sequence of chromosome of Serratia proteamaculans 568.</title>
        <authorList>
            <consortium name="US DOE Joint Genome Institute"/>
            <person name="Copeland A."/>
            <person name="Lucas S."/>
            <person name="Lapidus A."/>
            <person name="Barry K."/>
            <person name="Glavina del Rio T."/>
            <person name="Dalin E."/>
            <person name="Tice H."/>
            <person name="Pitluck S."/>
            <person name="Chain P."/>
            <person name="Malfatti S."/>
            <person name="Shin M."/>
            <person name="Vergez L."/>
            <person name="Schmutz J."/>
            <person name="Larimer F."/>
            <person name="Land M."/>
            <person name="Hauser L."/>
            <person name="Kyrpides N."/>
            <person name="Kim E."/>
            <person name="Taghavi S."/>
            <person name="Newman L."/>
            <person name="Vangronsveld J."/>
            <person name="van der Lelie D."/>
            <person name="Richardson P."/>
        </authorList>
    </citation>
    <scope>NUCLEOTIDE SEQUENCE [LARGE SCALE GENOMIC DNA]</scope>
    <source>
        <strain>568</strain>
    </source>
</reference>